<reference evidence="5" key="1">
    <citation type="journal article" date="2006" name="Biochem. J.">
        <title>A novel suite of cyclotides from Viola odorata: sequence variation and the implications for structure, function and stability.</title>
        <authorList>
            <person name="Ireland D.C."/>
            <person name="Colgrave M.L."/>
            <person name="Craik D.J."/>
        </authorList>
    </citation>
    <scope>PROTEIN SEQUENCE</scope>
    <scope>MASS SPECTROMETRY</scope>
</reference>
<reference key="2">
    <citation type="journal article" date="2017" name="J. Nat. Prod.">
        <title>Cyclotides from the Indian Medicinal Plant Viola odorata (Banafsha): Identification and Characterization.</title>
        <authorList>
            <person name="Narayani M."/>
            <person name="Chadha A."/>
            <person name="Srivastava S."/>
        </authorList>
    </citation>
    <scope>TISSUE SPECIFICITY</scope>
    <scope>IDENTIFICATION BY MASS SPECTROMETRY</scope>
</reference>
<keyword id="KW-0903">Direct protein sequencing</keyword>
<keyword id="KW-1015">Disulfide bond</keyword>
<keyword id="KW-0960">Knottin</keyword>
<keyword id="KW-0611">Plant defense</keyword>
<proteinExistence type="evidence at protein level"/>
<evidence type="ECO:0000250" key="1">
    <source>
        <dbReference type="UniProtKB" id="P82230"/>
    </source>
</evidence>
<evidence type="ECO:0000255" key="2">
    <source>
        <dbReference type="PROSITE-ProRule" id="PRU00395"/>
    </source>
</evidence>
<evidence type="ECO:0000269" key="3">
    <source>
    </source>
</evidence>
<evidence type="ECO:0000269" key="4">
    <source>
    </source>
</evidence>
<evidence type="ECO:0000305" key="5"/>
<organism>
    <name type="scientific">Viola odorata</name>
    <name type="common">Sweet violet</name>
    <dbReference type="NCBI Taxonomy" id="97441"/>
    <lineage>
        <taxon>Eukaryota</taxon>
        <taxon>Viridiplantae</taxon>
        <taxon>Streptophyta</taxon>
        <taxon>Embryophyta</taxon>
        <taxon>Tracheophyta</taxon>
        <taxon>Spermatophyta</taxon>
        <taxon>Magnoliopsida</taxon>
        <taxon>eudicotyledons</taxon>
        <taxon>Gunneridae</taxon>
        <taxon>Pentapetalae</taxon>
        <taxon>rosids</taxon>
        <taxon>fabids</taxon>
        <taxon>Malpighiales</taxon>
        <taxon>Violaceae</taxon>
        <taxon>Viola</taxon>
        <taxon>Viola subgen. Viola</taxon>
        <taxon>Viola sect. Viola</taxon>
        <taxon>Viola subsect. Viola</taxon>
    </lineage>
</organism>
<accession>P85181</accession>
<name>CYO18_VIOOD</name>
<comment type="function">
    <text evidence="5">Probably participates in a plant defense mechanism.</text>
</comment>
<comment type="tissue specificity">
    <text evidence="4">Expressed in leaves, petals and petioles but not in roots and runners (at protein level).</text>
</comment>
<comment type="domain">
    <text evidence="1">The presence of a 'disulfide through disulfide knot' structurally defines this protein as a knottin.</text>
</comment>
<comment type="PTM">
    <text evidence="2 3">This is a cyclic peptide.</text>
</comment>
<comment type="mass spectrometry"/>
<comment type="similarity">
    <text evidence="2">Belongs to the cyclotide family. Bracelet subfamily.</text>
</comment>
<comment type="caution">
    <text evidence="3">This peptide is cyclic. The start position was chosen by similarity to OAK1 (kalata-B1) for which the DNA sequence is known.</text>
</comment>
<protein>
    <recommendedName>
        <fullName>Cycloviolacin-O18</fullName>
    </recommendedName>
</protein>
<feature type="peptide" id="PRO_0000294947" description="Cycloviolacin-O18" evidence="2 3">
    <location>
        <begin position="1"/>
        <end position="30"/>
    </location>
</feature>
<feature type="disulfide bond" evidence="1 2">
    <location>
        <begin position="4"/>
        <end position="21"/>
    </location>
</feature>
<feature type="disulfide bond" evidence="1 2">
    <location>
        <begin position="8"/>
        <end position="23"/>
    </location>
</feature>
<feature type="disulfide bond" evidence="1 2">
    <location>
        <begin position="13"/>
        <end position="28"/>
    </location>
</feature>
<feature type="cross-link" description="Cyclopeptide (Gly-Asn)" evidence="3">
    <location>
        <begin position="1"/>
        <end position="30"/>
    </location>
</feature>
<sequence>GIPCGESCVYIPCTVTALAGCKCKSKVCYN</sequence>
<dbReference type="SMR" id="P85181"/>
<dbReference type="GO" id="GO:0006952">
    <property type="term" value="P:defense response"/>
    <property type="evidence" value="ECO:0007669"/>
    <property type="project" value="UniProtKB-KW"/>
</dbReference>
<dbReference type="InterPro" id="IPR005535">
    <property type="entry name" value="Cyclotide"/>
</dbReference>
<dbReference type="InterPro" id="IPR012323">
    <property type="entry name" value="Cyclotide_bracelet_CS"/>
</dbReference>
<dbReference type="InterPro" id="IPR036146">
    <property type="entry name" value="Cyclotide_sf"/>
</dbReference>
<dbReference type="Pfam" id="PF03784">
    <property type="entry name" value="Cyclotide"/>
    <property type="match status" value="1"/>
</dbReference>
<dbReference type="PIRSF" id="PIRSF037891">
    <property type="entry name" value="Cycloviolacin"/>
    <property type="match status" value="1"/>
</dbReference>
<dbReference type="SUPFAM" id="SSF57038">
    <property type="entry name" value="Cyclotides"/>
    <property type="match status" value="1"/>
</dbReference>
<dbReference type="PROSITE" id="PS51052">
    <property type="entry name" value="CYCLOTIDE"/>
    <property type="match status" value="1"/>
</dbReference>
<dbReference type="PROSITE" id="PS60008">
    <property type="entry name" value="CYCLOTIDE_BRACELET"/>
    <property type="match status" value="1"/>
</dbReference>